<keyword id="KW-0488">Methylation</keyword>
<keyword id="KW-0687">Ribonucleoprotein</keyword>
<keyword id="KW-0689">Ribosomal protein</keyword>
<keyword id="KW-0694">RNA-binding</keyword>
<keyword id="KW-0699">rRNA-binding</keyword>
<evidence type="ECO:0000255" key="1">
    <source>
        <dbReference type="HAMAP-Rule" id="MF_00736"/>
    </source>
</evidence>
<evidence type="ECO:0000305" key="2"/>
<dbReference type="EMBL" id="CR543861">
    <property type="protein sequence ID" value="CAG67263.1"/>
    <property type="molecule type" value="Genomic_DNA"/>
</dbReference>
<dbReference type="RefSeq" id="WP_004637639.1">
    <property type="nucleotide sequence ID" value="NC_005966.1"/>
</dbReference>
<dbReference type="SMR" id="Q6FF94"/>
<dbReference type="STRING" id="202950.GCA_001485005_00577"/>
<dbReference type="GeneID" id="92833913"/>
<dbReference type="KEGG" id="aci:ACIAD0302"/>
<dbReference type="eggNOG" id="COG0080">
    <property type="taxonomic scope" value="Bacteria"/>
</dbReference>
<dbReference type="HOGENOM" id="CLU_074237_2_0_6"/>
<dbReference type="OrthoDB" id="9802408at2"/>
<dbReference type="BioCyc" id="ASP62977:ACIAD_RS01440-MONOMER"/>
<dbReference type="Proteomes" id="UP000000430">
    <property type="component" value="Chromosome"/>
</dbReference>
<dbReference type="GO" id="GO:0022625">
    <property type="term" value="C:cytosolic large ribosomal subunit"/>
    <property type="evidence" value="ECO:0007669"/>
    <property type="project" value="TreeGrafter"/>
</dbReference>
<dbReference type="GO" id="GO:0070180">
    <property type="term" value="F:large ribosomal subunit rRNA binding"/>
    <property type="evidence" value="ECO:0007669"/>
    <property type="project" value="UniProtKB-UniRule"/>
</dbReference>
<dbReference type="GO" id="GO:0003735">
    <property type="term" value="F:structural constituent of ribosome"/>
    <property type="evidence" value="ECO:0007669"/>
    <property type="project" value="InterPro"/>
</dbReference>
<dbReference type="GO" id="GO:0006412">
    <property type="term" value="P:translation"/>
    <property type="evidence" value="ECO:0007669"/>
    <property type="project" value="UniProtKB-UniRule"/>
</dbReference>
<dbReference type="CDD" id="cd00349">
    <property type="entry name" value="Ribosomal_L11"/>
    <property type="match status" value="1"/>
</dbReference>
<dbReference type="FunFam" id="1.10.10.250:FF:000001">
    <property type="entry name" value="50S ribosomal protein L11"/>
    <property type="match status" value="1"/>
</dbReference>
<dbReference type="FunFam" id="3.30.1550.10:FF:000001">
    <property type="entry name" value="50S ribosomal protein L11"/>
    <property type="match status" value="1"/>
</dbReference>
<dbReference type="Gene3D" id="1.10.10.250">
    <property type="entry name" value="Ribosomal protein L11, C-terminal domain"/>
    <property type="match status" value="1"/>
</dbReference>
<dbReference type="Gene3D" id="3.30.1550.10">
    <property type="entry name" value="Ribosomal protein L11/L12, N-terminal domain"/>
    <property type="match status" value="1"/>
</dbReference>
<dbReference type="HAMAP" id="MF_00736">
    <property type="entry name" value="Ribosomal_uL11"/>
    <property type="match status" value="1"/>
</dbReference>
<dbReference type="InterPro" id="IPR000911">
    <property type="entry name" value="Ribosomal_uL11"/>
</dbReference>
<dbReference type="InterPro" id="IPR006519">
    <property type="entry name" value="Ribosomal_uL11_bac-typ"/>
</dbReference>
<dbReference type="InterPro" id="IPR020783">
    <property type="entry name" value="Ribosomal_uL11_C"/>
</dbReference>
<dbReference type="InterPro" id="IPR036769">
    <property type="entry name" value="Ribosomal_uL11_C_sf"/>
</dbReference>
<dbReference type="InterPro" id="IPR020785">
    <property type="entry name" value="Ribosomal_uL11_CS"/>
</dbReference>
<dbReference type="InterPro" id="IPR020784">
    <property type="entry name" value="Ribosomal_uL11_N"/>
</dbReference>
<dbReference type="InterPro" id="IPR036796">
    <property type="entry name" value="Ribosomal_uL11_N_sf"/>
</dbReference>
<dbReference type="NCBIfam" id="TIGR01632">
    <property type="entry name" value="L11_bact"/>
    <property type="match status" value="1"/>
</dbReference>
<dbReference type="PANTHER" id="PTHR11661">
    <property type="entry name" value="60S RIBOSOMAL PROTEIN L12"/>
    <property type="match status" value="1"/>
</dbReference>
<dbReference type="PANTHER" id="PTHR11661:SF1">
    <property type="entry name" value="LARGE RIBOSOMAL SUBUNIT PROTEIN UL11M"/>
    <property type="match status" value="1"/>
</dbReference>
<dbReference type="Pfam" id="PF00298">
    <property type="entry name" value="Ribosomal_L11"/>
    <property type="match status" value="1"/>
</dbReference>
<dbReference type="Pfam" id="PF03946">
    <property type="entry name" value="Ribosomal_L11_N"/>
    <property type="match status" value="1"/>
</dbReference>
<dbReference type="SMART" id="SM00649">
    <property type="entry name" value="RL11"/>
    <property type="match status" value="1"/>
</dbReference>
<dbReference type="SUPFAM" id="SSF54747">
    <property type="entry name" value="Ribosomal L11/L12e N-terminal domain"/>
    <property type="match status" value="1"/>
</dbReference>
<dbReference type="SUPFAM" id="SSF46906">
    <property type="entry name" value="Ribosomal protein L11, C-terminal domain"/>
    <property type="match status" value="1"/>
</dbReference>
<dbReference type="PROSITE" id="PS00359">
    <property type="entry name" value="RIBOSOMAL_L11"/>
    <property type="match status" value="1"/>
</dbReference>
<proteinExistence type="inferred from homology"/>
<feature type="chain" id="PRO_0000104231" description="Large ribosomal subunit protein uL11">
    <location>
        <begin position="1"/>
        <end position="142"/>
    </location>
</feature>
<accession>Q6FF94</accession>
<sequence>MAKKIDGYIKLQVPAGKANPSPPIGPALGQRGVNIMAFCKEFNAATQKLEVGLPIPVVITVYNDKSFTFIMKTPPASILLKKAAGIQKGSSVPNKTKVGKLTRAQLEEIATTKEPDLTGADLDARVRTIAGSARSMGLEVEL</sequence>
<reference key="1">
    <citation type="journal article" date="2004" name="Nucleic Acids Res.">
        <title>Unique features revealed by the genome sequence of Acinetobacter sp. ADP1, a versatile and naturally transformation competent bacterium.</title>
        <authorList>
            <person name="Barbe V."/>
            <person name="Vallenet D."/>
            <person name="Fonknechten N."/>
            <person name="Kreimeyer A."/>
            <person name="Oztas S."/>
            <person name="Labarre L."/>
            <person name="Cruveiller S."/>
            <person name="Robert C."/>
            <person name="Duprat S."/>
            <person name="Wincker P."/>
            <person name="Ornston L.N."/>
            <person name="Weissenbach J."/>
            <person name="Marliere P."/>
            <person name="Cohen G.N."/>
            <person name="Medigue C."/>
        </authorList>
    </citation>
    <scope>NUCLEOTIDE SEQUENCE [LARGE SCALE GENOMIC DNA]</scope>
    <source>
        <strain>ATCC 33305 / BD413 / ADP1</strain>
    </source>
</reference>
<name>RL11_ACIAD</name>
<comment type="function">
    <text evidence="1">Forms part of the ribosomal stalk which helps the ribosome interact with GTP-bound translation factors.</text>
</comment>
<comment type="subunit">
    <text evidence="1">Part of the ribosomal stalk of the 50S ribosomal subunit. Interacts with L10 and the large rRNA to form the base of the stalk. L10 forms an elongated spine to which L12 dimers bind in a sequential fashion forming a multimeric L10(L12)X complex.</text>
</comment>
<comment type="PTM">
    <text evidence="1">One or more lysine residues are methylated.</text>
</comment>
<comment type="similarity">
    <text evidence="1">Belongs to the universal ribosomal protein uL11 family.</text>
</comment>
<gene>
    <name evidence="1" type="primary">rplK</name>
    <name type="ordered locus">ACIAD0302</name>
</gene>
<protein>
    <recommendedName>
        <fullName evidence="1">Large ribosomal subunit protein uL11</fullName>
    </recommendedName>
    <alternativeName>
        <fullName evidence="2">50S ribosomal protein L11</fullName>
    </alternativeName>
</protein>
<organism>
    <name type="scientific">Acinetobacter baylyi (strain ATCC 33305 / BD413 / ADP1)</name>
    <dbReference type="NCBI Taxonomy" id="62977"/>
    <lineage>
        <taxon>Bacteria</taxon>
        <taxon>Pseudomonadati</taxon>
        <taxon>Pseudomonadota</taxon>
        <taxon>Gammaproteobacteria</taxon>
        <taxon>Moraxellales</taxon>
        <taxon>Moraxellaceae</taxon>
        <taxon>Acinetobacter</taxon>
    </lineage>
</organism>